<feature type="chain" id="PRO_0000437576" description="Disheveled-associated activator of morphogenesis 1-A">
    <location>
        <begin position="1"/>
        <end position="1081"/>
    </location>
</feature>
<feature type="domain" description="GBD/FH3" evidence="3">
    <location>
        <begin position="45"/>
        <end position="418"/>
    </location>
</feature>
<feature type="domain" description="FH2" evidence="4">
    <location>
        <begin position="603"/>
        <end position="1012"/>
    </location>
</feature>
<feature type="domain" description="DAD" evidence="2">
    <location>
        <begin position="1030"/>
        <end position="1061"/>
    </location>
</feature>
<feature type="region of interest" description="Disordered" evidence="5">
    <location>
        <begin position="455"/>
        <end position="476"/>
    </location>
</feature>
<feature type="region of interest" description="Disordered" evidence="5">
    <location>
        <begin position="519"/>
        <end position="615"/>
    </location>
</feature>
<feature type="region of interest" description="Actin-binding" evidence="1">
    <location>
        <begin position="696"/>
        <end position="705"/>
    </location>
</feature>
<feature type="region of interest" description="Disordered" evidence="5">
    <location>
        <begin position="1013"/>
        <end position="1038"/>
    </location>
</feature>
<feature type="region of interest" description="Disordered" evidence="5">
    <location>
        <begin position="1060"/>
        <end position="1081"/>
    </location>
</feature>
<feature type="compositionally biased region" description="Pro residues" evidence="5">
    <location>
        <begin position="526"/>
        <end position="536"/>
    </location>
</feature>
<feature type="compositionally biased region" description="Low complexity" evidence="5">
    <location>
        <begin position="538"/>
        <end position="547"/>
    </location>
</feature>
<feature type="compositionally biased region" description="Pro residues" evidence="5">
    <location>
        <begin position="548"/>
        <end position="585"/>
    </location>
</feature>
<feature type="compositionally biased region" description="Low complexity" evidence="5">
    <location>
        <begin position="586"/>
        <end position="600"/>
    </location>
</feature>
<feature type="compositionally biased region" description="Basic and acidic residues" evidence="5">
    <location>
        <begin position="1013"/>
        <end position="1029"/>
    </location>
</feature>
<feature type="compositionally biased region" description="Basic and acidic residues" evidence="5">
    <location>
        <begin position="1070"/>
        <end position="1081"/>
    </location>
</feature>
<keyword id="KW-0009">Actin-binding</keyword>
<keyword id="KW-0966">Cell projection</keyword>
<keyword id="KW-0963">Cytoplasm</keyword>
<keyword id="KW-0206">Cytoskeleton</keyword>
<keyword id="KW-1185">Reference proteome</keyword>
<keyword id="KW-0879">Wnt signaling pathway</keyword>
<reference key="1">
    <citation type="journal article" date="2015" name="J. Cell Biol.">
        <title>The polarity protein Inturned links NPHP4 to Daam1 to control the subapical actin network in multiciliated cells.</title>
        <authorList>
            <person name="Yasunaga T."/>
            <person name="Hoff S."/>
            <person name="Schell C."/>
            <person name="Helmstaedter M."/>
            <person name="Kretz O."/>
            <person name="Kuechlin S."/>
            <person name="Yakulov T.A."/>
            <person name="Engel C."/>
            <person name="Mueller B."/>
            <person name="Bensch R."/>
            <person name="Ronneberger O."/>
            <person name="Huber T.B."/>
            <person name="Lienkamp S.S."/>
            <person name="Walz G."/>
        </authorList>
    </citation>
    <scope>NUCLEOTIDE SEQUENCE [MRNA]</scope>
    <scope>FUNCTION</scope>
</reference>
<reference key="2">
    <citation type="journal article" date="2001" name="Cell">
        <title>Wnt/Frizzled activation of Rho regulates vertebrate gastrulation and requires a novel Formin homology protein Daam1.</title>
        <authorList>
            <person name="Habas R."/>
            <person name="Kato Y."/>
            <person name="He X."/>
        </authorList>
    </citation>
    <scope>FUNCTION</scope>
    <scope>DEVELOPMENTAL STAGE</scope>
</reference>
<comment type="function">
    <text evidence="1 6 7">Binds to disheveled (dsh) and Rho, and mediates Wnt-induced dsh-Rho complex formation during gastrulation (PubMed:11779461). May play a role as a scaffolding protein to recruit Rho-GDP and Rho-GEF, thereby enhancing Rho-GTP formation. Can direct nucleation and elongation of new actin filaments. Involved in building functional cilia (By similarity). Involved in building functional cilia. Involved in the organization of the subapical actin network in multiciliated epithelial cells (PubMed:26644512).</text>
</comment>
<comment type="subcellular location">
    <subcellularLocation>
        <location evidence="1">Cytoplasm</location>
    </subcellularLocation>
    <subcellularLocation>
        <location evidence="1">Cytoplasm</location>
        <location evidence="1">Cytoskeleton</location>
        <location evidence="1">Cilium basal body</location>
    </subcellularLocation>
</comment>
<comment type="developmental stage">
    <text evidence="6">Expressed throughout embryogenesis.</text>
</comment>
<sequence>MAPRKRNSRGVSFIFCCFRSSEHPEITYRLRNDSNFALQSMEPALPVPPVEELDAMFAELVDELDLSEKHREAMFALSAEKKWQIYCSKKKDHEEGATSWPEFYIDQLNSMAARRTLFAMDKEDEEERNKTIESLKTALRTKPMRFVTRFIDLDGLTCILNFLKSMDYEIAESQIHTSLIGCIKALMNNSQGRAHVLAHTESINVIAQSLATENIKTKVAVLEIMGAVCLVPGGHKKVLEAMLHYQRYASERTRFQTLINDLDRSTGRYRDEVSLKTAIMSFINAVLSQGAGVESLDFRLHLRYEFLMLGIQPVIDKLREHENSTLDRHLDFFEMLRNEDELEFAKRFDLVHIDTKSATQMFELIRKRLTHTESYPHFTSILHHCLQMPYKRSGNTVHYWLLLDRIVQQIVIQNEKGQDPDTSPLENFNVKNVVRMLVNENEVKQWKEQAEKMRKEHNELQQKLEKKERECDAKTQEKEEMMQTLNKMKEKLEKETTEYKNVKQQVAELTAQIQELNSRTVCAPGPGGPPPPPGAPGGPMSMPSGNFMPPPPPPPPPFPGGMAPPPPPPPPPPPPPGGPPPPPGLPLLGAAPPGAPLGLSMKKKNIPQPKNPLKSFNWSKLPDNKLEGTLWIDLDDAKVLKILDLEDIERTFSAYQRQQDFFVNNGIKQKEMDCTDDTLSSKMKVKELSVVDGRRAQNCNILLSRLKLTNEEIKRAILTMDEQEDLPKDMLEQLLKFVPEKSDIDLLEEHKHELDRMAKADRFLFEMSRINHYQQRLQSLYFKKKFAERVAEVKPKVEAIRDASKEVLQSKNLKQLLEVVLAFGNYMNKGQRGNAYGFKISSLNKIADTKSSIDKNITLLHYLITVVEKKYPKIVNLHEELQTISVAAKVNMTELEKEISALRNGLKSVENELEYQKTQPTLPGDKFVSVVSQFITVAGFSFCDVEDLLSEAKELFVKSAKRFGEETNKIQPDEFFGIFDQFLQAFLEAKQENENIRKRKEEEERRIRMEAQLKEQRERERKARKAKENGEEEGEFDDLVSALRSGEVFDKDLSKLKRNRKRIVSQTTESSRERPVTKLNY</sequence>
<proteinExistence type="evidence at transcript level"/>
<name>DAA1A_XENLA</name>
<evidence type="ECO:0000250" key="1">
    <source>
        <dbReference type="UniProtKB" id="Q9Y4D1"/>
    </source>
</evidence>
<evidence type="ECO:0000255" key="2">
    <source>
        <dbReference type="PROSITE-ProRule" id="PRU00577"/>
    </source>
</evidence>
<evidence type="ECO:0000255" key="3">
    <source>
        <dbReference type="PROSITE-ProRule" id="PRU00579"/>
    </source>
</evidence>
<evidence type="ECO:0000255" key="4">
    <source>
        <dbReference type="PROSITE-ProRule" id="PRU00774"/>
    </source>
</evidence>
<evidence type="ECO:0000256" key="5">
    <source>
        <dbReference type="SAM" id="MobiDB-lite"/>
    </source>
</evidence>
<evidence type="ECO:0000269" key="6">
    <source>
    </source>
</evidence>
<evidence type="ECO:0000269" key="7">
    <source>
    </source>
</evidence>
<protein>
    <recommendedName>
        <fullName>Disheveled-associated activator of morphogenesis 1-A</fullName>
    </recommendedName>
</protein>
<accession>B0DOB5</accession>
<dbReference type="SMR" id="B0DOB5"/>
<dbReference type="Proteomes" id="UP000186698">
    <property type="component" value="Unplaced"/>
</dbReference>
<dbReference type="GO" id="GO:0042995">
    <property type="term" value="C:cell projection"/>
    <property type="evidence" value="ECO:0007669"/>
    <property type="project" value="UniProtKB-KW"/>
</dbReference>
<dbReference type="GO" id="GO:0005737">
    <property type="term" value="C:cytoplasm"/>
    <property type="evidence" value="ECO:0007669"/>
    <property type="project" value="UniProtKB-SubCell"/>
</dbReference>
<dbReference type="GO" id="GO:0001725">
    <property type="term" value="C:stress fiber"/>
    <property type="evidence" value="ECO:0000318"/>
    <property type="project" value="GO_Central"/>
</dbReference>
<dbReference type="GO" id="GO:0003779">
    <property type="term" value="F:actin binding"/>
    <property type="evidence" value="ECO:0007669"/>
    <property type="project" value="UniProtKB-KW"/>
</dbReference>
<dbReference type="GO" id="GO:0031267">
    <property type="term" value="F:small GTPase binding"/>
    <property type="evidence" value="ECO:0007669"/>
    <property type="project" value="InterPro"/>
</dbReference>
<dbReference type="GO" id="GO:0030036">
    <property type="term" value="P:actin cytoskeleton organization"/>
    <property type="evidence" value="ECO:0007669"/>
    <property type="project" value="InterPro"/>
</dbReference>
<dbReference type="GO" id="GO:0016055">
    <property type="term" value="P:Wnt signaling pathway"/>
    <property type="evidence" value="ECO:0007669"/>
    <property type="project" value="UniProtKB-KW"/>
</dbReference>
<dbReference type="FunFam" id="1.10.238.150:FF:000001">
    <property type="entry name" value="Dishevelled associated activator of morphogenesis 1"/>
    <property type="match status" value="1"/>
</dbReference>
<dbReference type="FunFam" id="1.20.58.2220:FF:000002">
    <property type="entry name" value="Dishevelled associated activator of morphogenesis 1"/>
    <property type="match status" value="1"/>
</dbReference>
<dbReference type="FunFam" id="1.25.10.10:FF:000012">
    <property type="entry name" value="Dishevelled associated activator of morphogenesis 2"/>
    <property type="match status" value="1"/>
</dbReference>
<dbReference type="Gene3D" id="1.20.58.2220">
    <property type="entry name" value="Formin, FH2 domain"/>
    <property type="match status" value="1"/>
</dbReference>
<dbReference type="Gene3D" id="1.10.238.150">
    <property type="entry name" value="Formin, FH3 diaphanous domain"/>
    <property type="match status" value="1"/>
</dbReference>
<dbReference type="Gene3D" id="1.25.10.10">
    <property type="entry name" value="Leucine-rich Repeat Variant"/>
    <property type="match status" value="1"/>
</dbReference>
<dbReference type="Gene3D" id="1.20.120.330">
    <property type="entry name" value="Nucleotidyltransferases domain 2"/>
    <property type="match status" value="1"/>
</dbReference>
<dbReference type="InterPro" id="IPR011989">
    <property type="entry name" value="ARM-like"/>
</dbReference>
<dbReference type="InterPro" id="IPR016024">
    <property type="entry name" value="ARM-type_fold"/>
</dbReference>
<dbReference type="InterPro" id="IPR014767">
    <property type="entry name" value="DAD_dom"/>
</dbReference>
<dbReference type="InterPro" id="IPR015425">
    <property type="entry name" value="FH2_Formin"/>
</dbReference>
<dbReference type="InterPro" id="IPR042201">
    <property type="entry name" value="FH2_Formin_sf"/>
</dbReference>
<dbReference type="InterPro" id="IPR010472">
    <property type="entry name" value="FH3_dom"/>
</dbReference>
<dbReference type="InterPro" id="IPR051425">
    <property type="entry name" value="Formin_Homology"/>
</dbReference>
<dbReference type="InterPro" id="IPR014768">
    <property type="entry name" value="GBD/FH3_dom"/>
</dbReference>
<dbReference type="InterPro" id="IPR010473">
    <property type="entry name" value="GTPase-bd"/>
</dbReference>
<dbReference type="PANTHER" id="PTHR45725:SF16">
    <property type="entry name" value="DISHEVELED-ASSOCIATED ACTIVATOR OF MORPHOGENESIS 1"/>
    <property type="match status" value="1"/>
</dbReference>
<dbReference type="PANTHER" id="PTHR45725">
    <property type="entry name" value="FORMIN HOMOLOGY 2 FAMILY MEMBER"/>
    <property type="match status" value="1"/>
</dbReference>
<dbReference type="Pfam" id="PF06367">
    <property type="entry name" value="Drf_FH3"/>
    <property type="match status" value="1"/>
</dbReference>
<dbReference type="Pfam" id="PF06371">
    <property type="entry name" value="Drf_GBD"/>
    <property type="match status" value="1"/>
</dbReference>
<dbReference type="Pfam" id="PF02181">
    <property type="entry name" value="FH2"/>
    <property type="match status" value="1"/>
</dbReference>
<dbReference type="SMART" id="SM01139">
    <property type="entry name" value="Drf_FH3"/>
    <property type="match status" value="1"/>
</dbReference>
<dbReference type="SMART" id="SM01140">
    <property type="entry name" value="Drf_GBD"/>
    <property type="match status" value="1"/>
</dbReference>
<dbReference type="SMART" id="SM00498">
    <property type="entry name" value="FH2"/>
    <property type="match status" value="1"/>
</dbReference>
<dbReference type="SUPFAM" id="SSF48371">
    <property type="entry name" value="ARM repeat"/>
    <property type="match status" value="1"/>
</dbReference>
<dbReference type="SUPFAM" id="SSF101447">
    <property type="entry name" value="Formin homology 2 domain (FH2 domain)"/>
    <property type="match status" value="1"/>
</dbReference>
<dbReference type="PROSITE" id="PS51231">
    <property type="entry name" value="DAD"/>
    <property type="match status" value="1"/>
</dbReference>
<dbReference type="PROSITE" id="PS51444">
    <property type="entry name" value="FH2"/>
    <property type="match status" value="1"/>
</dbReference>
<dbReference type="PROSITE" id="PS51232">
    <property type="entry name" value="GBD_FH3"/>
    <property type="match status" value="1"/>
</dbReference>
<gene>
    <name type="primary">daam1-a</name>
</gene>
<organism>
    <name type="scientific">Xenopus laevis</name>
    <name type="common">African clawed frog</name>
    <dbReference type="NCBI Taxonomy" id="8355"/>
    <lineage>
        <taxon>Eukaryota</taxon>
        <taxon>Metazoa</taxon>
        <taxon>Chordata</taxon>
        <taxon>Craniata</taxon>
        <taxon>Vertebrata</taxon>
        <taxon>Euteleostomi</taxon>
        <taxon>Amphibia</taxon>
        <taxon>Batrachia</taxon>
        <taxon>Anura</taxon>
        <taxon>Pipoidea</taxon>
        <taxon>Pipidae</taxon>
        <taxon>Xenopodinae</taxon>
        <taxon>Xenopus</taxon>
        <taxon>Xenopus</taxon>
    </lineage>
</organism>